<evidence type="ECO:0000250" key="1"/>
<evidence type="ECO:0000250" key="2">
    <source>
        <dbReference type="UniProtKB" id="P20366"/>
    </source>
</evidence>
<evidence type="ECO:0000255" key="3"/>
<evidence type="ECO:0000303" key="4">
    <source ref="1"/>
</evidence>
<evidence type="ECO:0000305" key="5"/>
<organism>
    <name type="scientific">Mesocricetus auratus</name>
    <name type="common">Golden hamster</name>
    <dbReference type="NCBI Taxonomy" id="10036"/>
    <lineage>
        <taxon>Eukaryota</taxon>
        <taxon>Metazoa</taxon>
        <taxon>Chordata</taxon>
        <taxon>Craniata</taxon>
        <taxon>Vertebrata</taxon>
        <taxon>Euteleostomi</taxon>
        <taxon>Mammalia</taxon>
        <taxon>Eutheria</taxon>
        <taxon>Euarchontoglires</taxon>
        <taxon>Glires</taxon>
        <taxon>Rodentia</taxon>
        <taxon>Myomorpha</taxon>
        <taxon>Muroidea</taxon>
        <taxon>Cricetidae</taxon>
        <taxon>Cricetinae</taxon>
        <taxon>Mesocricetus</taxon>
    </lineage>
</organism>
<dbReference type="EMBL" id="X80662">
    <property type="protein sequence ID" value="CAA56691.1"/>
    <property type="molecule type" value="mRNA"/>
</dbReference>
<dbReference type="EMBL" id="X80663">
    <property type="protein sequence ID" value="CAA56692.1"/>
    <property type="molecule type" value="mRNA"/>
</dbReference>
<dbReference type="PIR" id="S47038">
    <property type="entry name" value="S47038"/>
</dbReference>
<dbReference type="PIR" id="S47039">
    <property type="entry name" value="S47039"/>
</dbReference>
<dbReference type="STRING" id="10036.ENSMAUP00000001110"/>
<dbReference type="eggNOG" id="ENOG502S1KJ">
    <property type="taxonomic scope" value="Eukaryota"/>
</dbReference>
<dbReference type="Proteomes" id="UP000189706">
    <property type="component" value="Unplaced"/>
</dbReference>
<dbReference type="GO" id="GO:0005615">
    <property type="term" value="C:extracellular space"/>
    <property type="evidence" value="ECO:0007669"/>
    <property type="project" value="TreeGrafter"/>
</dbReference>
<dbReference type="GO" id="GO:0045202">
    <property type="term" value="C:synapse"/>
    <property type="evidence" value="ECO:0007669"/>
    <property type="project" value="GOC"/>
</dbReference>
<dbReference type="GO" id="GO:0031835">
    <property type="term" value="F:substance P receptor binding"/>
    <property type="evidence" value="ECO:0007669"/>
    <property type="project" value="TreeGrafter"/>
</dbReference>
<dbReference type="GO" id="GO:0007268">
    <property type="term" value="P:chemical synaptic transmission"/>
    <property type="evidence" value="ECO:0007669"/>
    <property type="project" value="UniProtKB-KW"/>
</dbReference>
<dbReference type="GO" id="GO:0006954">
    <property type="term" value="P:inflammatory response"/>
    <property type="evidence" value="ECO:0007669"/>
    <property type="project" value="TreeGrafter"/>
</dbReference>
<dbReference type="GO" id="GO:0007218">
    <property type="term" value="P:neuropeptide signaling pathway"/>
    <property type="evidence" value="ECO:0007669"/>
    <property type="project" value="UniProtKB-KW"/>
</dbReference>
<dbReference type="GO" id="GO:0007204">
    <property type="term" value="P:positive regulation of cytosolic calcium ion concentration"/>
    <property type="evidence" value="ECO:0007669"/>
    <property type="project" value="TreeGrafter"/>
</dbReference>
<dbReference type="GO" id="GO:0007217">
    <property type="term" value="P:tachykinin receptor signaling pathway"/>
    <property type="evidence" value="ECO:0007669"/>
    <property type="project" value="InterPro"/>
</dbReference>
<dbReference type="InterPro" id="IPR013055">
    <property type="entry name" value="Tachy_Neuro_lke_CS"/>
</dbReference>
<dbReference type="InterPro" id="IPR008215">
    <property type="entry name" value="Tachykinin_dom"/>
</dbReference>
<dbReference type="InterPro" id="IPR008216">
    <property type="entry name" value="Tachykinin_fam"/>
</dbReference>
<dbReference type="PANTHER" id="PTHR11250:SF3">
    <property type="entry name" value="PROTACHYKININ-1"/>
    <property type="match status" value="1"/>
</dbReference>
<dbReference type="PANTHER" id="PTHR11250">
    <property type="entry name" value="TACHYKININ"/>
    <property type="match status" value="1"/>
</dbReference>
<dbReference type="Pfam" id="PF02202">
    <property type="entry name" value="Tachykinin"/>
    <property type="match status" value="1"/>
</dbReference>
<dbReference type="PRINTS" id="PR01829">
    <property type="entry name" value="PROTACHYKNIN"/>
</dbReference>
<dbReference type="SMART" id="SM00203">
    <property type="entry name" value="TK"/>
    <property type="match status" value="2"/>
</dbReference>
<dbReference type="PROSITE" id="PS00267">
    <property type="entry name" value="TACHYKININ"/>
    <property type="match status" value="2"/>
</dbReference>
<protein>
    <recommendedName>
        <fullName>Protachykinin-1</fullName>
    </recommendedName>
    <alternativeName>
        <fullName>PPT</fullName>
    </alternativeName>
    <component>
        <recommendedName>
            <fullName>Substance P</fullName>
        </recommendedName>
    </component>
    <component>
        <recommendedName>
            <fullName>Neurokinin A</fullName>
            <shortName>NKA</shortName>
        </recommendedName>
        <alternativeName>
            <fullName>Neuromedin L</fullName>
        </alternativeName>
        <alternativeName>
            <fullName>Substance K</fullName>
        </alternativeName>
    </component>
    <component>
        <recommendedName>
            <fullName>Neuropeptide K</fullName>
            <shortName>NPK</shortName>
        </recommendedName>
    </component>
    <component>
        <recommendedName>
            <fullName>Neuropeptide gamma</fullName>
        </recommendedName>
    </component>
    <component>
        <recommendedName>
            <fullName>C-terminal-flanking peptide</fullName>
        </recommendedName>
    </component>
</protein>
<reference key="1">
    <citation type="submission" date="1994-07" db="EMBL/GenBank/DDBJ databases">
        <authorList>
            <person name="Heitland A."/>
            <person name="Kruhoffer M."/>
            <person name="Juergen Maegert H.J."/>
            <person name="Forssmann W.-G."/>
        </authorList>
    </citation>
    <scope>NUCLEOTIDE SEQUENCE [MRNA] (ISOFORMS BETA AND GAMMA)</scope>
    <source>
        <strain>Aura</strain>
        <tissue>Brain</tissue>
    </source>
</reference>
<name>TKN1_MESAU</name>
<accession>Q60541</accession>
<accession>P49110</accession>
<keyword id="KW-0025">Alternative splicing</keyword>
<keyword id="KW-0027">Amidation</keyword>
<keyword id="KW-0165">Cleavage on pair of basic residues</keyword>
<keyword id="KW-0527">Neuropeptide</keyword>
<keyword id="KW-0529">Neurotransmitter</keyword>
<keyword id="KW-1185">Reference proteome</keyword>
<keyword id="KW-0964">Secreted</keyword>
<keyword id="KW-0732">Signal</keyword>
<sequence>MKILVAVAVFFLVSTQLSAEEIGANDDLNYWSDWSDSDQIKEALPEPFEHILQRIARRPKPQQFFGLMGKRDADSSIEKQVALLKALYGHGQISHKRHKTDSFVGLMGKRALNSVAFERSAMQNYERRRK</sequence>
<proteinExistence type="evidence at transcript level"/>
<gene>
    <name type="primary">TAC1</name>
    <name type="synonym">NKA</name>
    <name type="synonym">NKNA</name>
    <name type="synonym">TAC2</name>
</gene>
<comment type="function">
    <text>Tachykinins are active peptides which excite neurons, evoke behavioral responses, are potent vasodilators and secretagogues, and contract (directly or indirectly) many smooth muscles.</text>
</comment>
<comment type="subcellular location">
    <subcellularLocation>
        <location>Secreted</location>
    </subcellularLocation>
</comment>
<comment type="alternative products">
    <event type="alternative splicing"/>
    <isoform>
        <id>Q60541-1</id>
        <name>Beta</name>
        <sequence type="displayed"/>
    </isoform>
    <isoform>
        <id>Q60541-3</id>
        <name>Alpha</name>
        <sequence type="not described"/>
    </isoform>
    <isoform>
        <id>Q60541-2</id>
        <name>Gamma</name>
        <sequence type="described" ref="VSP_006378"/>
    </isoform>
    <isoform>
        <id>Q60541-4</id>
        <name>Delta</name>
        <sequence type="not described"/>
    </isoform>
</comment>
<comment type="PTM">
    <molecule>Substance P</molecule>
    <text evidence="2">The substance P form is cleaved at Pro-59 by the prolyl endopeptidase FAP (seprase) activity (in vitro). Substance P is also cleaved and degraded by Angiotensin-converting enzyme (ACE) and neprilysin (MME).</text>
</comment>
<comment type="similarity">
    <text evidence="5">Belongs to the tachykinin family.</text>
</comment>
<feature type="signal peptide" evidence="3">
    <location>
        <begin position="1"/>
        <end position="19"/>
    </location>
</feature>
<feature type="propeptide" id="PRO_0000033536" evidence="3">
    <location>
        <begin position="20"/>
        <end position="56"/>
    </location>
</feature>
<feature type="peptide" id="PRO_0000033537" description="Substance P">
    <location>
        <begin position="58"/>
        <end position="68"/>
    </location>
</feature>
<feature type="peptide" id="PRO_0000033538" description="Neuropeptide K">
    <location>
        <begin position="72"/>
        <end position="107"/>
    </location>
</feature>
<feature type="peptide" id="PRO_0000033539" description="Neuropeptide gamma, 1st part">
    <location>
        <begin position="72"/>
        <end position="73"/>
    </location>
</feature>
<feature type="peptide" id="PRO_0000033540" description="Neuropeptide gamma, 2nd part">
    <location>
        <begin position="89"/>
        <end position="107"/>
    </location>
</feature>
<feature type="peptide" id="PRO_0000033541" description="Neurokinin A">
    <location>
        <begin position="98"/>
        <end position="107"/>
    </location>
</feature>
<feature type="peptide" id="PRO_0000033542" description="C-terminal-flanking peptide" evidence="1">
    <location>
        <begin position="111"/>
        <end position="126"/>
    </location>
</feature>
<feature type="site" description="Cleavage; by FAP" evidence="2">
    <location>
        <begin position="59"/>
        <end position="60"/>
    </location>
</feature>
<feature type="site" description="Cleavage; by MME" evidence="2">
    <location>
        <begin position="63"/>
        <end position="64"/>
    </location>
</feature>
<feature type="site" description="Cleavage; by MME" evidence="2">
    <location>
        <begin position="64"/>
        <end position="65"/>
    </location>
</feature>
<feature type="site" description="Cleavage; by ACE" evidence="2">
    <location>
        <begin position="65"/>
        <end position="66"/>
    </location>
</feature>
<feature type="site" description="Cleavage; by ACE and MME" evidence="2">
    <location>
        <begin position="66"/>
        <end position="67"/>
    </location>
</feature>
<feature type="modified residue" description="Methionine amide" evidence="2">
    <location>
        <position position="68"/>
    </location>
</feature>
<feature type="modified residue" description="Methionine amide" evidence="2">
    <location>
        <position position="107"/>
    </location>
</feature>
<feature type="splice variant" id="VSP_006378" description="In isoform Gamma." evidence="4">
    <location>
        <begin position="74"/>
        <end position="88"/>
    </location>
</feature>